<comment type="function">
    <text evidence="1">Molecular chaperone; binds unfolded polypeptides in vitro, and has a weak ATPase activity.</text>
</comment>
<comment type="subunit">
    <text evidence="1">Forms an oligomeric complex of eight-membered rings.</text>
</comment>
<comment type="similarity">
    <text evidence="2">Belongs to the TCP-1 chaperonin family.</text>
</comment>
<keyword id="KW-0067">ATP-binding</keyword>
<keyword id="KW-0143">Chaperone</keyword>
<keyword id="KW-0547">Nucleotide-binding</keyword>
<keyword id="KW-1185">Reference proteome</keyword>
<accession>P50016</accession>
<accession>Q49607</accession>
<organism>
    <name type="scientific">Methanopyrus kandleri (strain AV19 / DSM 6324 / JCM 9639 / NBRC 100938)</name>
    <dbReference type="NCBI Taxonomy" id="190192"/>
    <lineage>
        <taxon>Archaea</taxon>
        <taxon>Methanobacteriati</taxon>
        <taxon>Methanobacteriota</taxon>
        <taxon>Methanomada group</taxon>
        <taxon>Methanopyri</taxon>
        <taxon>Methanopyrales</taxon>
        <taxon>Methanopyraceae</taxon>
        <taxon>Methanopyrus</taxon>
    </lineage>
</organism>
<feature type="chain" id="PRO_0000128391" description="Thermosome subunit">
    <location>
        <begin position="1"/>
        <end position="545"/>
    </location>
</feature>
<evidence type="ECO:0000250" key="1"/>
<evidence type="ECO:0000305" key="2"/>
<name>THS_METKA</name>
<reference key="1">
    <citation type="journal article" date="1996" name="FEBS Lett.">
        <title>Purification and structural characterization of the thermosome from the hyperthermophilic archaeum Methanopyrus kandleri.</title>
        <authorList>
            <person name="Andrae S."/>
            <person name="Frey G."/>
            <person name="Nitsch M."/>
            <person name="Baumeister W."/>
            <person name="Stetter K.O."/>
        </authorList>
    </citation>
    <scope>NUCLEOTIDE SEQUENCE [GENOMIC DNA]</scope>
    <source>
        <strain>AV19 / DSM 6324 / JCM 9639 / NBRC 100938</strain>
    </source>
</reference>
<reference key="2">
    <citation type="journal article" date="2002" name="Proc. Natl. Acad. Sci. U.S.A.">
        <title>The complete genome of hyperthermophile Methanopyrus kandleri AV19 and monophyly of archaeal methanogens.</title>
        <authorList>
            <person name="Slesarev A.I."/>
            <person name="Mezhevaya K.V."/>
            <person name="Makarova K.S."/>
            <person name="Polushin N.N."/>
            <person name="Shcherbinina O.V."/>
            <person name="Shakhova V.V."/>
            <person name="Belova G.I."/>
            <person name="Aravind L."/>
            <person name="Natale D.A."/>
            <person name="Rogozin I.B."/>
            <person name="Tatusov R.L."/>
            <person name="Wolf Y.I."/>
            <person name="Stetter K.O."/>
            <person name="Malykh A.G."/>
            <person name="Koonin E.V."/>
            <person name="Kozyavkin S.A."/>
        </authorList>
    </citation>
    <scope>NUCLEOTIDE SEQUENCE [LARGE SCALE GENOMIC DNA]</scope>
    <source>
        <strain>AV19 / DSM 6324 / JCM 9639 / NBRC 100938</strain>
    </source>
</reference>
<gene>
    <name type="primary">ths</name>
    <name type="ordered locus">MK1006</name>
</gene>
<protein>
    <recommendedName>
        <fullName>Thermosome subunit</fullName>
    </recommendedName>
    <alternativeName>
        <fullName>Chaperonin-like complex</fullName>
        <shortName>CLIC</shortName>
    </alternativeName>
</protein>
<proteinExistence type="inferred from homology"/>
<dbReference type="EMBL" id="Z50745">
    <property type="protein sequence ID" value="CAA90621.1"/>
    <property type="molecule type" value="Genomic_DNA"/>
</dbReference>
<dbReference type="EMBL" id="Z49052">
    <property type="protein sequence ID" value="CAA88843.1"/>
    <property type="molecule type" value="Genomic_DNA"/>
</dbReference>
<dbReference type="EMBL" id="AE009439">
    <property type="protein sequence ID" value="AAM02219.1"/>
    <property type="molecule type" value="Genomic_DNA"/>
</dbReference>
<dbReference type="PIR" id="S54118">
    <property type="entry name" value="S54118"/>
</dbReference>
<dbReference type="PIR" id="S68687">
    <property type="entry name" value="S68687"/>
</dbReference>
<dbReference type="RefSeq" id="WP_011019374.1">
    <property type="nucleotide sequence ID" value="NC_003551.1"/>
</dbReference>
<dbReference type="SMR" id="P50016"/>
<dbReference type="FunCoup" id="P50016">
    <property type="interactions" value="191"/>
</dbReference>
<dbReference type="STRING" id="190192.MK1006"/>
<dbReference type="PaxDb" id="190192-MK1006"/>
<dbReference type="EnsemblBacteria" id="AAM02219">
    <property type="protein sequence ID" value="AAM02219"/>
    <property type="gene ID" value="MK1006"/>
</dbReference>
<dbReference type="GeneID" id="1477107"/>
<dbReference type="KEGG" id="mka:MK1006"/>
<dbReference type="PATRIC" id="fig|190192.8.peg.1055"/>
<dbReference type="HOGENOM" id="CLU_008891_7_3_2"/>
<dbReference type="InParanoid" id="P50016"/>
<dbReference type="OrthoDB" id="9362at2157"/>
<dbReference type="Proteomes" id="UP000001826">
    <property type="component" value="Chromosome"/>
</dbReference>
<dbReference type="GO" id="GO:0005524">
    <property type="term" value="F:ATP binding"/>
    <property type="evidence" value="ECO:0007669"/>
    <property type="project" value="UniProtKB-KW"/>
</dbReference>
<dbReference type="GO" id="GO:0016887">
    <property type="term" value="F:ATP hydrolysis activity"/>
    <property type="evidence" value="ECO:0007669"/>
    <property type="project" value="InterPro"/>
</dbReference>
<dbReference type="GO" id="GO:0140662">
    <property type="term" value="F:ATP-dependent protein folding chaperone"/>
    <property type="evidence" value="ECO:0007669"/>
    <property type="project" value="InterPro"/>
</dbReference>
<dbReference type="GO" id="GO:0051082">
    <property type="term" value="F:unfolded protein binding"/>
    <property type="evidence" value="ECO:0007669"/>
    <property type="project" value="InterPro"/>
</dbReference>
<dbReference type="CDD" id="cd03343">
    <property type="entry name" value="cpn60"/>
    <property type="match status" value="1"/>
</dbReference>
<dbReference type="FunFam" id="1.10.560.10:FF:000017">
    <property type="entry name" value="T-complex protein 1 subunit eta"/>
    <property type="match status" value="1"/>
</dbReference>
<dbReference type="Gene3D" id="3.50.7.10">
    <property type="entry name" value="GroEL"/>
    <property type="match status" value="1"/>
</dbReference>
<dbReference type="Gene3D" id="1.10.560.10">
    <property type="entry name" value="GroEL-like equatorial domain"/>
    <property type="match status" value="1"/>
</dbReference>
<dbReference type="Gene3D" id="3.30.260.10">
    <property type="entry name" value="TCP-1-like chaperonin intermediate domain"/>
    <property type="match status" value="1"/>
</dbReference>
<dbReference type="InterPro" id="IPR017998">
    <property type="entry name" value="Chaperone_TCP-1"/>
</dbReference>
<dbReference type="InterPro" id="IPR002194">
    <property type="entry name" value="Chaperonin_TCP-1_CS"/>
</dbReference>
<dbReference type="InterPro" id="IPR002423">
    <property type="entry name" value="Cpn60/GroEL/TCP-1"/>
</dbReference>
<dbReference type="InterPro" id="IPR027409">
    <property type="entry name" value="GroEL-like_apical_dom_sf"/>
</dbReference>
<dbReference type="InterPro" id="IPR027413">
    <property type="entry name" value="GROEL-like_equatorial_sf"/>
</dbReference>
<dbReference type="InterPro" id="IPR027410">
    <property type="entry name" value="TCP-1-like_intermed_sf"/>
</dbReference>
<dbReference type="InterPro" id="IPR053374">
    <property type="entry name" value="TCP-1_chaperonin"/>
</dbReference>
<dbReference type="InterPro" id="IPR054827">
    <property type="entry name" value="thermosome_alpha"/>
</dbReference>
<dbReference type="InterPro" id="IPR012714">
    <property type="entry name" value="Thermosome_arc"/>
</dbReference>
<dbReference type="NCBIfam" id="NF041082">
    <property type="entry name" value="thermosome_alpha"/>
    <property type="match status" value="1"/>
</dbReference>
<dbReference type="NCBIfam" id="TIGR02339">
    <property type="entry name" value="thermosome_arch"/>
    <property type="match status" value="1"/>
</dbReference>
<dbReference type="NCBIfam" id="NF041083">
    <property type="entry name" value="thermosome_beta"/>
    <property type="match status" value="1"/>
</dbReference>
<dbReference type="PANTHER" id="PTHR11353">
    <property type="entry name" value="CHAPERONIN"/>
    <property type="match status" value="1"/>
</dbReference>
<dbReference type="Pfam" id="PF00118">
    <property type="entry name" value="Cpn60_TCP1"/>
    <property type="match status" value="1"/>
</dbReference>
<dbReference type="PRINTS" id="PR00304">
    <property type="entry name" value="TCOMPLEXTCP1"/>
</dbReference>
<dbReference type="SUPFAM" id="SSF52029">
    <property type="entry name" value="GroEL apical domain-like"/>
    <property type="match status" value="1"/>
</dbReference>
<dbReference type="SUPFAM" id="SSF48592">
    <property type="entry name" value="GroEL equatorial domain-like"/>
    <property type="match status" value="1"/>
</dbReference>
<dbReference type="SUPFAM" id="SSF54849">
    <property type="entry name" value="GroEL-intermediate domain like"/>
    <property type="match status" value="1"/>
</dbReference>
<dbReference type="PROSITE" id="PS00750">
    <property type="entry name" value="TCP1_1"/>
    <property type="match status" value="1"/>
</dbReference>
<dbReference type="PROSITE" id="PS00751">
    <property type="entry name" value="TCP1_2"/>
    <property type="match status" value="1"/>
</dbReference>
<dbReference type="PROSITE" id="PS00995">
    <property type="entry name" value="TCP1_3"/>
    <property type="match status" value="1"/>
</dbReference>
<sequence length="545" mass="59474">MAMLAGDGRQVLILPEGYQRFVGRDAQRMNIMAARVVAETVRTTLGPMGMDKMLVDEMGDVVVTNDGVTILEEMDIEHPAAKMVVEVAKTQEDEVGDGTTTAVVLAGELLHKAEDLLQQDIHPTVIARGYRMAVEKAEEILEEIAEEIDPDDEETLKKIAKTAMTGKGVEKARDYLAELVVKAVKQVAEEEDGEIVIDTDHIKLEKKEGGGLEDTELVKGMVIDKERVHPGMPRRVENAKIALLNCPIEVKETETDAEIRITDPEQLQAFIEEEERMLSEMVDKIAETGANVVFCQKGIDDLAQHYLAKKGILAVRRVKKSDMQKLARATGARIVTNIDDLSEEDLGEAEVVEEKKVAGDKMIFVEGCKDPKAVTILIRGGTEHVVDEAERAIEDAIGVVAAALEDGKVVAGGGAPEVEVARQLRDFADGVEGREQLAVEAFADALEIIPRTLAENSGLDPIDVLVQLRAKHEDGQVTAGIDVYDGDVKDMLEEGVVEPLRVKTQALASATEAAEMILRIDDVIAARELSKEEEEEEEEGGSSEF</sequence>